<keyword id="KW-1185">Reference proteome</keyword>
<keyword id="KW-0687">Ribonucleoprotein</keyword>
<keyword id="KW-0689">Ribosomal protein</keyword>
<proteinExistence type="inferred from homology"/>
<accession>A4VHQ1</accession>
<dbReference type="EMBL" id="CP000304">
    <property type="protein sequence ID" value="ABP78502.1"/>
    <property type="molecule type" value="Genomic_DNA"/>
</dbReference>
<dbReference type="RefSeq" id="WP_003281814.1">
    <property type="nucleotide sequence ID" value="NC_009434.1"/>
</dbReference>
<dbReference type="SMR" id="A4VHQ1"/>
<dbReference type="GeneID" id="84598430"/>
<dbReference type="KEGG" id="psa:PST_0805"/>
<dbReference type="eggNOG" id="COG0257">
    <property type="taxonomic scope" value="Bacteria"/>
</dbReference>
<dbReference type="HOGENOM" id="CLU_135723_6_2_6"/>
<dbReference type="Proteomes" id="UP000000233">
    <property type="component" value="Chromosome"/>
</dbReference>
<dbReference type="GO" id="GO:0005737">
    <property type="term" value="C:cytoplasm"/>
    <property type="evidence" value="ECO:0007669"/>
    <property type="project" value="UniProtKB-ARBA"/>
</dbReference>
<dbReference type="GO" id="GO:1990904">
    <property type="term" value="C:ribonucleoprotein complex"/>
    <property type="evidence" value="ECO:0007669"/>
    <property type="project" value="UniProtKB-KW"/>
</dbReference>
<dbReference type="GO" id="GO:0005840">
    <property type="term" value="C:ribosome"/>
    <property type="evidence" value="ECO:0007669"/>
    <property type="project" value="UniProtKB-KW"/>
</dbReference>
<dbReference type="GO" id="GO:0003735">
    <property type="term" value="F:structural constituent of ribosome"/>
    <property type="evidence" value="ECO:0007669"/>
    <property type="project" value="InterPro"/>
</dbReference>
<dbReference type="GO" id="GO:0006412">
    <property type="term" value="P:translation"/>
    <property type="evidence" value="ECO:0007669"/>
    <property type="project" value="UniProtKB-UniRule"/>
</dbReference>
<dbReference type="HAMAP" id="MF_00251">
    <property type="entry name" value="Ribosomal_bL36"/>
    <property type="match status" value="1"/>
</dbReference>
<dbReference type="InterPro" id="IPR000473">
    <property type="entry name" value="Ribosomal_bL36"/>
</dbReference>
<dbReference type="InterPro" id="IPR035977">
    <property type="entry name" value="Ribosomal_bL36_sp"/>
</dbReference>
<dbReference type="NCBIfam" id="TIGR01022">
    <property type="entry name" value="rpmJ_bact"/>
    <property type="match status" value="1"/>
</dbReference>
<dbReference type="PANTHER" id="PTHR42888">
    <property type="entry name" value="50S RIBOSOMAL PROTEIN L36, CHLOROPLASTIC"/>
    <property type="match status" value="1"/>
</dbReference>
<dbReference type="PANTHER" id="PTHR42888:SF1">
    <property type="entry name" value="LARGE RIBOSOMAL SUBUNIT PROTEIN BL36C"/>
    <property type="match status" value="1"/>
</dbReference>
<dbReference type="Pfam" id="PF00444">
    <property type="entry name" value="Ribosomal_L36"/>
    <property type="match status" value="1"/>
</dbReference>
<dbReference type="SUPFAM" id="SSF57840">
    <property type="entry name" value="Ribosomal protein L36"/>
    <property type="match status" value="1"/>
</dbReference>
<dbReference type="PROSITE" id="PS00828">
    <property type="entry name" value="RIBOSOMAL_L36"/>
    <property type="match status" value="1"/>
</dbReference>
<reference key="1">
    <citation type="journal article" date="2008" name="Proc. Natl. Acad. Sci. U.S.A.">
        <title>Nitrogen fixation island and rhizosphere competence traits in the genome of root-associated Pseudomonas stutzeri A1501.</title>
        <authorList>
            <person name="Yan Y."/>
            <person name="Yang J."/>
            <person name="Dou Y."/>
            <person name="Chen M."/>
            <person name="Ping S."/>
            <person name="Peng J."/>
            <person name="Lu W."/>
            <person name="Zhang W."/>
            <person name="Yao Z."/>
            <person name="Li H."/>
            <person name="Liu W."/>
            <person name="He S."/>
            <person name="Geng L."/>
            <person name="Zhang X."/>
            <person name="Yang F."/>
            <person name="Yu H."/>
            <person name="Zhan Y."/>
            <person name="Li D."/>
            <person name="Lin Z."/>
            <person name="Wang Y."/>
            <person name="Elmerich C."/>
            <person name="Lin M."/>
            <person name="Jin Q."/>
        </authorList>
    </citation>
    <scope>NUCLEOTIDE SEQUENCE [LARGE SCALE GENOMIC DNA]</scope>
    <source>
        <strain>A1501</strain>
    </source>
</reference>
<evidence type="ECO:0000255" key="1">
    <source>
        <dbReference type="HAMAP-Rule" id="MF_00251"/>
    </source>
</evidence>
<evidence type="ECO:0000305" key="2"/>
<comment type="similarity">
    <text evidence="1">Belongs to the bacterial ribosomal protein bL36 family.</text>
</comment>
<name>RL36_STUS1</name>
<protein>
    <recommendedName>
        <fullName evidence="1">Large ribosomal subunit protein bL36</fullName>
    </recommendedName>
    <alternativeName>
        <fullName evidence="2">50S ribosomal protein L36</fullName>
    </alternativeName>
</protein>
<feature type="chain" id="PRO_0000302273" description="Large ribosomal subunit protein bL36">
    <location>
        <begin position="1"/>
        <end position="38"/>
    </location>
</feature>
<gene>
    <name evidence="1" type="primary">rpmJ</name>
    <name type="ordered locus">PST_0805</name>
</gene>
<organism>
    <name type="scientific">Stutzerimonas stutzeri (strain A1501)</name>
    <name type="common">Pseudomonas stutzeri</name>
    <dbReference type="NCBI Taxonomy" id="379731"/>
    <lineage>
        <taxon>Bacteria</taxon>
        <taxon>Pseudomonadati</taxon>
        <taxon>Pseudomonadota</taxon>
        <taxon>Gammaproteobacteria</taxon>
        <taxon>Pseudomonadales</taxon>
        <taxon>Pseudomonadaceae</taxon>
        <taxon>Stutzerimonas</taxon>
    </lineage>
</organism>
<sequence length="38" mass="4420">MKVRASVKKLCRNCKIIRRDGVVRVICSAEPRHKQRQG</sequence>